<feature type="chain" id="PRO_0000345650" description="Cell division protein ZapA">
    <location>
        <begin position="1"/>
        <end position="109"/>
    </location>
</feature>
<feature type="coiled-coil region" evidence="1">
    <location>
        <begin position="21"/>
        <end position="99"/>
    </location>
</feature>
<keyword id="KW-0131">Cell cycle</keyword>
<keyword id="KW-0132">Cell division</keyword>
<keyword id="KW-0175">Coiled coil</keyword>
<keyword id="KW-0963">Cytoplasm</keyword>
<keyword id="KW-0717">Septation</keyword>
<gene>
    <name evidence="1" type="primary">zapA</name>
    <name type="ordered locus">EcHS_A3069</name>
</gene>
<protein>
    <recommendedName>
        <fullName evidence="1">Cell division protein ZapA</fullName>
    </recommendedName>
    <alternativeName>
        <fullName evidence="1">Z ring-associated protein ZapA</fullName>
    </alternativeName>
</protein>
<dbReference type="EMBL" id="CP000802">
    <property type="protein sequence ID" value="ABV07305.1"/>
    <property type="molecule type" value="Genomic_DNA"/>
</dbReference>
<dbReference type="RefSeq" id="WP_001276008.1">
    <property type="nucleotide sequence ID" value="NC_009800.1"/>
</dbReference>
<dbReference type="SMR" id="A8A451"/>
<dbReference type="GeneID" id="93779091"/>
<dbReference type="KEGG" id="ecx:EcHS_A3069"/>
<dbReference type="HOGENOM" id="CLU_116623_3_0_6"/>
<dbReference type="GO" id="GO:0032153">
    <property type="term" value="C:cell division site"/>
    <property type="evidence" value="ECO:0007669"/>
    <property type="project" value="TreeGrafter"/>
</dbReference>
<dbReference type="GO" id="GO:0030428">
    <property type="term" value="C:cell septum"/>
    <property type="evidence" value="ECO:0007669"/>
    <property type="project" value="TreeGrafter"/>
</dbReference>
<dbReference type="GO" id="GO:0005829">
    <property type="term" value="C:cytosol"/>
    <property type="evidence" value="ECO:0007669"/>
    <property type="project" value="TreeGrafter"/>
</dbReference>
<dbReference type="GO" id="GO:0005886">
    <property type="term" value="C:plasma membrane"/>
    <property type="evidence" value="ECO:0007669"/>
    <property type="project" value="UniProtKB-UniRule"/>
</dbReference>
<dbReference type="GO" id="GO:0000917">
    <property type="term" value="P:division septum assembly"/>
    <property type="evidence" value="ECO:0007669"/>
    <property type="project" value="UniProtKB-KW"/>
</dbReference>
<dbReference type="GO" id="GO:0043093">
    <property type="term" value="P:FtsZ-dependent cytokinesis"/>
    <property type="evidence" value="ECO:0007669"/>
    <property type="project" value="TreeGrafter"/>
</dbReference>
<dbReference type="GO" id="GO:0000921">
    <property type="term" value="P:septin ring assembly"/>
    <property type="evidence" value="ECO:0007669"/>
    <property type="project" value="TreeGrafter"/>
</dbReference>
<dbReference type="FunFam" id="1.20.5.50:FF:000001">
    <property type="entry name" value="Cell division protein ZapA"/>
    <property type="match status" value="1"/>
</dbReference>
<dbReference type="FunFam" id="3.30.160.880:FF:000001">
    <property type="entry name" value="Cell division protein ZapA"/>
    <property type="match status" value="1"/>
</dbReference>
<dbReference type="Gene3D" id="1.20.5.50">
    <property type="match status" value="1"/>
</dbReference>
<dbReference type="Gene3D" id="3.30.160.880">
    <property type="entry name" value="Cell division protein ZapA protomer, N-terminal domain"/>
    <property type="match status" value="1"/>
</dbReference>
<dbReference type="HAMAP" id="MF_02012">
    <property type="entry name" value="ZapA_type1"/>
    <property type="match status" value="1"/>
</dbReference>
<dbReference type="InterPro" id="IPR007838">
    <property type="entry name" value="Cell_div_ZapA-like"/>
</dbReference>
<dbReference type="InterPro" id="IPR036192">
    <property type="entry name" value="Cell_div_ZapA-like_sf"/>
</dbReference>
<dbReference type="InterPro" id="IPR023771">
    <property type="entry name" value="Cell_div_ZapA_eubact"/>
</dbReference>
<dbReference type="InterPro" id="IPR042233">
    <property type="entry name" value="Cell_div_ZapA_N"/>
</dbReference>
<dbReference type="NCBIfam" id="NF008209">
    <property type="entry name" value="PRK10972.1"/>
    <property type="match status" value="1"/>
</dbReference>
<dbReference type="PANTHER" id="PTHR34981">
    <property type="entry name" value="CELL DIVISION PROTEIN ZAPA"/>
    <property type="match status" value="1"/>
</dbReference>
<dbReference type="PANTHER" id="PTHR34981:SF1">
    <property type="entry name" value="CELL DIVISION PROTEIN ZAPA"/>
    <property type="match status" value="1"/>
</dbReference>
<dbReference type="Pfam" id="PF05164">
    <property type="entry name" value="ZapA"/>
    <property type="match status" value="1"/>
</dbReference>
<dbReference type="SUPFAM" id="SSF102829">
    <property type="entry name" value="Cell division protein ZapA-like"/>
    <property type="match status" value="1"/>
</dbReference>
<proteinExistence type="inferred from homology"/>
<evidence type="ECO:0000255" key="1">
    <source>
        <dbReference type="HAMAP-Rule" id="MF_02012"/>
    </source>
</evidence>
<comment type="function">
    <text evidence="1">Activator of cell division through the inhibition of FtsZ GTPase activity, therefore promoting FtsZ assembly into bundles of protofilaments necessary for the formation of the division Z ring. It is recruited early at mid-cell but it is not essential for cell division.</text>
</comment>
<comment type="subunit">
    <text evidence="1">Homodimer. Interacts with FtsZ.</text>
</comment>
<comment type="subcellular location">
    <subcellularLocation>
        <location evidence="1">Cytoplasm</location>
    </subcellularLocation>
    <text evidence="1">Localizes at mid-cell.</text>
</comment>
<comment type="similarity">
    <text evidence="1">Belongs to the ZapA family. Type 1 subfamily.</text>
</comment>
<name>ZAPA_ECOHS</name>
<accession>A8A451</accession>
<organism>
    <name type="scientific">Escherichia coli O9:H4 (strain HS)</name>
    <dbReference type="NCBI Taxonomy" id="331112"/>
    <lineage>
        <taxon>Bacteria</taxon>
        <taxon>Pseudomonadati</taxon>
        <taxon>Pseudomonadota</taxon>
        <taxon>Gammaproteobacteria</taxon>
        <taxon>Enterobacterales</taxon>
        <taxon>Enterobacteriaceae</taxon>
        <taxon>Escherichia</taxon>
    </lineage>
</organism>
<reference key="1">
    <citation type="journal article" date="2008" name="J. Bacteriol.">
        <title>The pangenome structure of Escherichia coli: comparative genomic analysis of E. coli commensal and pathogenic isolates.</title>
        <authorList>
            <person name="Rasko D.A."/>
            <person name="Rosovitz M.J."/>
            <person name="Myers G.S.A."/>
            <person name="Mongodin E.F."/>
            <person name="Fricke W.F."/>
            <person name="Gajer P."/>
            <person name="Crabtree J."/>
            <person name="Sebaihia M."/>
            <person name="Thomson N.R."/>
            <person name="Chaudhuri R."/>
            <person name="Henderson I.R."/>
            <person name="Sperandio V."/>
            <person name="Ravel J."/>
        </authorList>
    </citation>
    <scope>NUCLEOTIDE SEQUENCE [LARGE SCALE GENOMIC DNA]</scope>
    <source>
        <strain>HS</strain>
    </source>
</reference>
<sequence length="109" mass="12594">MSAQPVDIQIFGRSLRVNCPPDQRDALNQAADDLNQRLQDLKERTRVTNTEQLVFIAALNISYELAQEKAKTRDYAASMEQRIRMLQQTIEQALLEQGRITEKTNQNFE</sequence>